<proteinExistence type="inferred from homology"/>
<gene>
    <name type="ORF">GE13372</name>
</gene>
<name>SMG8_DROYA</name>
<dbReference type="EMBL" id="CM000157">
    <property type="protein sequence ID" value="EDW87986.1"/>
    <property type="molecule type" value="Genomic_DNA"/>
</dbReference>
<dbReference type="SMR" id="B4P0U1"/>
<dbReference type="EnsemblMetazoa" id="FBtr0259890">
    <property type="protein sequence ID" value="FBpp0258382"/>
    <property type="gene ID" value="FBgn0231051"/>
</dbReference>
<dbReference type="EnsemblMetazoa" id="XM_002088238.4">
    <property type="protein sequence ID" value="XP_002088274.1"/>
    <property type="gene ID" value="LOC6527180"/>
</dbReference>
<dbReference type="GeneID" id="6527180"/>
<dbReference type="KEGG" id="dya:Dyak_GE13372"/>
<dbReference type="eggNOG" id="KOG3692">
    <property type="taxonomic scope" value="Eukaryota"/>
</dbReference>
<dbReference type="HOGENOM" id="CLU_008116_0_0_1"/>
<dbReference type="OMA" id="HVCHIVV"/>
<dbReference type="OrthoDB" id="63589at2759"/>
<dbReference type="PhylomeDB" id="B4P0U1"/>
<dbReference type="Proteomes" id="UP000002282">
    <property type="component" value="Chromosome 2L"/>
</dbReference>
<dbReference type="GO" id="GO:0000184">
    <property type="term" value="P:nuclear-transcribed mRNA catabolic process, nonsense-mediated decay"/>
    <property type="evidence" value="ECO:0000250"/>
    <property type="project" value="UniProtKB"/>
</dbReference>
<dbReference type="InterPro" id="IPR019354">
    <property type="entry name" value="SMG8-like"/>
</dbReference>
<dbReference type="PANTHER" id="PTHR13091">
    <property type="entry name" value="AMPLIFIED IN BREAST CANCER 2-RELATED"/>
    <property type="match status" value="1"/>
</dbReference>
<dbReference type="PANTHER" id="PTHR13091:SF0">
    <property type="entry name" value="NONSENSE-MEDIATED MRNA DECAY FACTOR SMG8"/>
    <property type="match status" value="1"/>
</dbReference>
<dbReference type="Pfam" id="PF10220">
    <property type="entry name" value="Smg8_Smg9"/>
    <property type="match status" value="1"/>
</dbReference>
<protein>
    <recommendedName>
        <fullName evidence="2">Nonsense-mediated mRNA decay factor SMG8</fullName>
    </recommendedName>
    <alternativeName>
        <fullName>Protein smg-8 homolog</fullName>
    </alternativeName>
</protein>
<sequence length="950" mass="107692">MMKDYYTWTYPDIPENVSQELRQLKSSLVVVGIVGRSKCDQANKMQAFGMEPPIEHKAKEGQVQCYYKLGTSSLLLHFETTYDEAILGQMIDVCMEDVETPFDFDSFYERMRCRFVRMMLLALHACHIVVYVETGQTFDPTLVTVFQLLKFAREQHLMQFLPQMLRETPSARMSERARLCAPRILFLFENFPRDEPKTRECVSAYEFQTEDCIYELLRHHNIVTNSSSSSLVALPNNKQFVFFNAHEQLHEDKLLKAIDCLNQAMYKPDAKEEEEDLEILELAPFEGFVKPYNLPVDDKELEKQQYKQDHTVWHFLQRHVQDALLGCFDEGSFKQHSQQGQFQLLNIHEWHNYMATLHKLLVENAKDPNQETSNEDYKLFLKSFDESLNYEKKFWAHLCELGLKKGIAAYKNAAPANYGNSTHRQLLADATVAFEEEGRGPQAKAALAKMAAICQKHWQDGRQQCEQLSLRSHPCTLPKNLPHEKHNSGVIHISSCNCGRTQGRREDPFNLRQANYEFYEHIAQMCNLCVKVKQYQLPIFEPSVSDYRAAAFEAAFPLLHTGKSGAPQDEDGEEDAEDEEGQEQQQPAEEQRQNTASNGCSQPLSPTFGSDLNMSIAGFGASLNESQASSEQLSNSEQNSTSSGTSSADTENELVVELQELHAKKEARDDAGPADAFSTSTTEYLPGLVHTVSNFGLLPLFPSWSLACVGPSSIYSHNTGLQEHFQSGFLSGANFLLPWDVQLRLVHAPKQQHHTHHQQQHLGKKQQRWKKQGDRLSLKIFVGMEYECSRGHRFMMCAPDRVLRGGADIERETCSKVVHNNMPLYYPCPCRSQTSYLAQLMRIHVVTPKAPVNIIVDPKVCVGKGKYTFTLGSIVPPRLSQSAYWIIRLPYVYQGDDVLIAPPEKLEPDDPLAGGYLLPGMFGVAETDPTLDLNEPGRMGASAAGNFTRI</sequence>
<evidence type="ECO:0000250" key="1"/>
<evidence type="ECO:0000250" key="2">
    <source>
        <dbReference type="UniProtKB" id="Q8ND04"/>
    </source>
</evidence>
<evidence type="ECO:0000256" key="3">
    <source>
        <dbReference type="SAM" id="MobiDB-lite"/>
    </source>
</evidence>
<evidence type="ECO:0000305" key="4"/>
<feature type="chain" id="PRO_0000378182" description="Nonsense-mediated mRNA decay factor SMG8">
    <location>
        <begin position="1"/>
        <end position="950"/>
    </location>
</feature>
<feature type="region of interest" description="Disordered" evidence="3">
    <location>
        <begin position="560"/>
        <end position="607"/>
    </location>
</feature>
<feature type="region of interest" description="Disordered" evidence="3">
    <location>
        <begin position="624"/>
        <end position="651"/>
    </location>
</feature>
<feature type="compositionally biased region" description="Acidic residues" evidence="3">
    <location>
        <begin position="568"/>
        <end position="582"/>
    </location>
</feature>
<feature type="compositionally biased region" description="Polar residues" evidence="3">
    <location>
        <begin position="593"/>
        <end position="607"/>
    </location>
</feature>
<feature type="compositionally biased region" description="Low complexity" evidence="3">
    <location>
        <begin position="624"/>
        <end position="648"/>
    </location>
</feature>
<comment type="function">
    <text evidence="1">Involved in nonsense-mediated decay (NMD) of mRNAs containing premature stop codons. Probable component of kinase complex containing nonC and recruited to stalled ribosomes (By similarity).</text>
</comment>
<comment type="similarity">
    <text evidence="4">Belongs to the SMG8 family.</text>
</comment>
<reference key="1">
    <citation type="journal article" date="2007" name="Nature">
        <title>Evolution of genes and genomes on the Drosophila phylogeny.</title>
        <authorList>
            <consortium name="Drosophila 12 genomes consortium"/>
        </authorList>
    </citation>
    <scope>NUCLEOTIDE SEQUENCE [LARGE SCALE GENOMIC DNA]</scope>
    <source>
        <strain>Tai18E2 / Tucson 14021-0261.01</strain>
    </source>
</reference>
<organism>
    <name type="scientific">Drosophila yakuba</name>
    <name type="common">Fruit fly</name>
    <dbReference type="NCBI Taxonomy" id="7245"/>
    <lineage>
        <taxon>Eukaryota</taxon>
        <taxon>Metazoa</taxon>
        <taxon>Ecdysozoa</taxon>
        <taxon>Arthropoda</taxon>
        <taxon>Hexapoda</taxon>
        <taxon>Insecta</taxon>
        <taxon>Pterygota</taxon>
        <taxon>Neoptera</taxon>
        <taxon>Endopterygota</taxon>
        <taxon>Diptera</taxon>
        <taxon>Brachycera</taxon>
        <taxon>Muscomorpha</taxon>
        <taxon>Ephydroidea</taxon>
        <taxon>Drosophilidae</taxon>
        <taxon>Drosophila</taxon>
        <taxon>Sophophora</taxon>
    </lineage>
</organism>
<accession>B4P0U1</accession>
<keyword id="KW-0866">Nonsense-mediated mRNA decay</keyword>